<gene>
    <name evidence="1" type="primary">psd</name>
    <name type="ordered locus">HCH_05397</name>
</gene>
<name>PSD_HAHCH</name>
<keyword id="KW-1003">Cell membrane</keyword>
<keyword id="KW-0210">Decarboxylase</keyword>
<keyword id="KW-0444">Lipid biosynthesis</keyword>
<keyword id="KW-0443">Lipid metabolism</keyword>
<keyword id="KW-0456">Lyase</keyword>
<keyword id="KW-0472">Membrane</keyword>
<keyword id="KW-0594">Phospholipid biosynthesis</keyword>
<keyword id="KW-1208">Phospholipid metabolism</keyword>
<keyword id="KW-0670">Pyruvate</keyword>
<keyword id="KW-1185">Reference proteome</keyword>
<keyword id="KW-0865">Zymogen</keyword>
<proteinExistence type="inferred from homology"/>
<feature type="chain" id="PRO_0000262119" description="Phosphatidylserine decarboxylase beta chain" evidence="1">
    <location>
        <begin position="1"/>
        <end position="250"/>
    </location>
</feature>
<feature type="chain" id="PRO_0000262120" description="Phosphatidylserine decarboxylase alpha chain" evidence="1">
    <location>
        <begin position="251"/>
        <end position="296"/>
    </location>
</feature>
<feature type="active site" description="Charge relay system; for autoendoproteolytic cleavage activity" evidence="1">
    <location>
        <position position="92"/>
    </location>
</feature>
<feature type="active site" description="Charge relay system; for autoendoproteolytic cleavage activity" evidence="1">
    <location>
        <position position="149"/>
    </location>
</feature>
<feature type="active site" description="Charge relay system; for autoendoproteolytic cleavage activity" evidence="1">
    <location>
        <position position="251"/>
    </location>
</feature>
<feature type="active site" description="Schiff-base intermediate with substrate; via pyruvic acid; for decarboxylase activity" evidence="1">
    <location>
        <position position="251"/>
    </location>
</feature>
<feature type="site" description="Cleavage (non-hydrolytic); by autocatalysis" evidence="1">
    <location>
        <begin position="250"/>
        <end position="251"/>
    </location>
</feature>
<feature type="modified residue" description="Pyruvic acid (Ser); by autocatalysis" evidence="1">
    <location>
        <position position="251"/>
    </location>
</feature>
<sequence length="296" mass="33038">MSLFDRLFILSQHLTPQHALSRAIGKLADSRTPFIKNTFIKWFIKRYNVNMQEALLPSAEDYTCFNDFFTRALKDGARPIHPDVSRLVTPVDGAVSQAGSIDYGKIFQAKGHSFSLVELLGGDLQRAQPFIGGEFATIYLSPKDYHRIHMPIDGELREMIFVPGKLYSVNPLTTENVPALFARNERVVCIFDTPLGPMSMTLVGAMIVASVETIWAGRVAPMSKTVRSYTYKPGEVTIKRGEEMGRFCLGSTVVMTFPKGAMRWREGLKAETPVRLGEDLGKILQTVATVDEQKTD</sequence>
<dbReference type="EC" id="4.1.1.65" evidence="1"/>
<dbReference type="EMBL" id="CP000155">
    <property type="protein sequence ID" value="ABC32066.1"/>
    <property type="molecule type" value="Genomic_DNA"/>
</dbReference>
<dbReference type="RefSeq" id="WP_011399130.1">
    <property type="nucleotide sequence ID" value="NC_007645.1"/>
</dbReference>
<dbReference type="SMR" id="Q2SBA8"/>
<dbReference type="STRING" id="349521.HCH_05397"/>
<dbReference type="KEGG" id="hch:HCH_05397"/>
<dbReference type="eggNOG" id="COG0688">
    <property type="taxonomic scope" value="Bacteria"/>
</dbReference>
<dbReference type="HOGENOM" id="CLU_029061_4_1_6"/>
<dbReference type="OrthoDB" id="9802030at2"/>
<dbReference type="UniPathway" id="UPA00558">
    <property type="reaction ID" value="UER00616"/>
</dbReference>
<dbReference type="Proteomes" id="UP000000238">
    <property type="component" value="Chromosome"/>
</dbReference>
<dbReference type="GO" id="GO:0005886">
    <property type="term" value="C:plasma membrane"/>
    <property type="evidence" value="ECO:0007669"/>
    <property type="project" value="UniProtKB-SubCell"/>
</dbReference>
<dbReference type="GO" id="GO:0004609">
    <property type="term" value="F:phosphatidylserine decarboxylase activity"/>
    <property type="evidence" value="ECO:0007669"/>
    <property type="project" value="UniProtKB-UniRule"/>
</dbReference>
<dbReference type="GO" id="GO:0006646">
    <property type="term" value="P:phosphatidylethanolamine biosynthetic process"/>
    <property type="evidence" value="ECO:0007669"/>
    <property type="project" value="UniProtKB-UniRule"/>
</dbReference>
<dbReference type="HAMAP" id="MF_00662">
    <property type="entry name" value="PS_decarb_PSD_B_type1"/>
    <property type="match status" value="1"/>
</dbReference>
<dbReference type="InterPro" id="IPR003817">
    <property type="entry name" value="PS_Dcarbxylase"/>
</dbReference>
<dbReference type="InterPro" id="IPR033177">
    <property type="entry name" value="PSD-B"/>
</dbReference>
<dbReference type="InterPro" id="IPR033178">
    <property type="entry name" value="PSD_type1_pro"/>
</dbReference>
<dbReference type="NCBIfam" id="TIGR00163">
    <property type="entry name" value="PS_decarb"/>
    <property type="match status" value="1"/>
</dbReference>
<dbReference type="PANTHER" id="PTHR10067">
    <property type="entry name" value="PHOSPHATIDYLSERINE DECARBOXYLASE"/>
    <property type="match status" value="1"/>
</dbReference>
<dbReference type="PANTHER" id="PTHR10067:SF6">
    <property type="entry name" value="PHOSPHATIDYLSERINE DECARBOXYLASE PROENZYME, MITOCHONDRIAL"/>
    <property type="match status" value="1"/>
</dbReference>
<dbReference type="Pfam" id="PF02666">
    <property type="entry name" value="PS_Dcarbxylase"/>
    <property type="match status" value="1"/>
</dbReference>
<comment type="function">
    <text evidence="1">Catalyzes the formation of phosphatidylethanolamine (PtdEtn) from phosphatidylserine (PtdSer).</text>
</comment>
<comment type="catalytic activity">
    <reaction evidence="1">
        <text>a 1,2-diacyl-sn-glycero-3-phospho-L-serine + H(+) = a 1,2-diacyl-sn-glycero-3-phosphoethanolamine + CO2</text>
        <dbReference type="Rhea" id="RHEA:20828"/>
        <dbReference type="ChEBI" id="CHEBI:15378"/>
        <dbReference type="ChEBI" id="CHEBI:16526"/>
        <dbReference type="ChEBI" id="CHEBI:57262"/>
        <dbReference type="ChEBI" id="CHEBI:64612"/>
        <dbReference type="EC" id="4.1.1.65"/>
    </reaction>
</comment>
<comment type="cofactor">
    <cofactor evidence="1">
        <name>pyruvate</name>
        <dbReference type="ChEBI" id="CHEBI:15361"/>
    </cofactor>
    <text evidence="1">Binds 1 pyruvoyl group covalently per subunit.</text>
</comment>
<comment type="pathway">
    <text evidence="1">Phospholipid metabolism; phosphatidylethanolamine biosynthesis; phosphatidylethanolamine from CDP-diacylglycerol: step 2/2.</text>
</comment>
<comment type="subunit">
    <text evidence="1">Heterodimer of a large membrane-associated beta subunit and a small pyruvoyl-containing alpha subunit.</text>
</comment>
<comment type="subcellular location">
    <subcellularLocation>
        <location evidence="1">Cell membrane</location>
        <topology evidence="1">Peripheral membrane protein</topology>
    </subcellularLocation>
</comment>
<comment type="PTM">
    <text evidence="1">Is synthesized initially as an inactive proenzyme. Formation of the active enzyme involves a self-maturation process in which the active site pyruvoyl group is generated from an internal serine residue via an autocatalytic post-translational modification. Two non-identical subunits are generated from the proenzyme in this reaction, and the pyruvate is formed at the N-terminus of the alpha chain, which is derived from the carboxyl end of the proenzyme. The autoendoproteolytic cleavage occurs by a canonical serine protease mechanism, in which the side chain hydroxyl group of the serine supplies its oxygen atom to form the C-terminus of the beta chain, while the remainder of the serine residue undergoes an oxidative deamination to produce ammonia and the pyruvoyl prosthetic group on the alpha chain. During this reaction, the Ser that is part of the protease active site of the proenzyme becomes the pyruvoyl prosthetic group, which constitutes an essential element of the active site of the mature decarboxylase.</text>
</comment>
<comment type="similarity">
    <text evidence="1">Belongs to the phosphatidylserine decarboxylase family. PSD-B subfamily. Prokaryotic type I sub-subfamily.</text>
</comment>
<accession>Q2SBA8</accession>
<reference key="1">
    <citation type="journal article" date="2005" name="Nucleic Acids Res.">
        <title>Genomic blueprint of Hahella chejuensis, a marine microbe producing an algicidal agent.</title>
        <authorList>
            <person name="Jeong H."/>
            <person name="Yim J.H."/>
            <person name="Lee C."/>
            <person name="Choi S.-H."/>
            <person name="Park Y.K."/>
            <person name="Yoon S.H."/>
            <person name="Hur C.-G."/>
            <person name="Kang H.-Y."/>
            <person name="Kim D."/>
            <person name="Lee H.H."/>
            <person name="Park K.H."/>
            <person name="Park S.-H."/>
            <person name="Park H.-S."/>
            <person name="Lee H.K."/>
            <person name="Oh T.K."/>
            <person name="Kim J.F."/>
        </authorList>
    </citation>
    <scope>NUCLEOTIDE SEQUENCE [LARGE SCALE GENOMIC DNA]</scope>
    <source>
        <strain>KCTC 2396</strain>
    </source>
</reference>
<protein>
    <recommendedName>
        <fullName evidence="1">Phosphatidylserine decarboxylase proenzyme</fullName>
        <ecNumber evidence="1">4.1.1.65</ecNumber>
    </recommendedName>
    <component>
        <recommendedName>
            <fullName evidence="1">Phosphatidylserine decarboxylase alpha chain</fullName>
        </recommendedName>
    </component>
    <component>
        <recommendedName>
            <fullName evidence="1">Phosphatidylserine decarboxylase beta chain</fullName>
        </recommendedName>
    </component>
</protein>
<organism>
    <name type="scientific">Hahella chejuensis (strain KCTC 2396)</name>
    <dbReference type="NCBI Taxonomy" id="349521"/>
    <lineage>
        <taxon>Bacteria</taxon>
        <taxon>Pseudomonadati</taxon>
        <taxon>Pseudomonadota</taxon>
        <taxon>Gammaproteobacteria</taxon>
        <taxon>Oceanospirillales</taxon>
        <taxon>Hahellaceae</taxon>
        <taxon>Hahella</taxon>
    </lineage>
</organism>
<evidence type="ECO:0000255" key="1">
    <source>
        <dbReference type="HAMAP-Rule" id="MF_00662"/>
    </source>
</evidence>